<keyword id="KW-1185">Reference proteome</keyword>
<keyword id="KW-0687">Ribonucleoprotein</keyword>
<keyword id="KW-0689">Ribosomal protein</keyword>
<keyword id="KW-0694">RNA-binding</keyword>
<keyword id="KW-0699">rRNA-binding</keyword>
<keyword id="KW-0820">tRNA-binding</keyword>
<accession>Q89J80</accession>
<dbReference type="EMBL" id="BA000040">
    <property type="protein sequence ID" value="BAC50669.1"/>
    <property type="molecule type" value="Genomic_DNA"/>
</dbReference>
<dbReference type="RefSeq" id="NP_772044.1">
    <property type="nucleotide sequence ID" value="NC_004463.1"/>
</dbReference>
<dbReference type="RefSeq" id="WP_011088154.1">
    <property type="nucleotide sequence ID" value="NC_004463.1"/>
</dbReference>
<dbReference type="SMR" id="Q89J80"/>
<dbReference type="FunCoup" id="Q89J80">
    <property type="interactions" value="890"/>
</dbReference>
<dbReference type="STRING" id="224911.AAV28_24430"/>
<dbReference type="EnsemblBacteria" id="BAC50669">
    <property type="protein sequence ID" value="BAC50669"/>
    <property type="gene ID" value="BAC50669"/>
</dbReference>
<dbReference type="GeneID" id="46492402"/>
<dbReference type="KEGG" id="bja:bll5404"/>
<dbReference type="PATRIC" id="fig|224911.44.peg.5303"/>
<dbReference type="eggNOG" id="COG0049">
    <property type="taxonomic scope" value="Bacteria"/>
</dbReference>
<dbReference type="HOGENOM" id="CLU_072226_1_1_5"/>
<dbReference type="InParanoid" id="Q89J80"/>
<dbReference type="OrthoDB" id="9807653at2"/>
<dbReference type="PhylomeDB" id="Q89J80"/>
<dbReference type="Proteomes" id="UP000002526">
    <property type="component" value="Chromosome"/>
</dbReference>
<dbReference type="GO" id="GO:0022627">
    <property type="term" value="C:cytosolic small ribosomal subunit"/>
    <property type="evidence" value="ECO:0000318"/>
    <property type="project" value="GO_Central"/>
</dbReference>
<dbReference type="GO" id="GO:0005840">
    <property type="term" value="C:ribosome"/>
    <property type="evidence" value="ECO:0000318"/>
    <property type="project" value="GO_Central"/>
</dbReference>
<dbReference type="GO" id="GO:0003729">
    <property type="term" value="F:mRNA binding"/>
    <property type="evidence" value="ECO:0000318"/>
    <property type="project" value="GO_Central"/>
</dbReference>
<dbReference type="GO" id="GO:0019843">
    <property type="term" value="F:rRNA binding"/>
    <property type="evidence" value="ECO:0000318"/>
    <property type="project" value="GO_Central"/>
</dbReference>
<dbReference type="GO" id="GO:0003735">
    <property type="term" value="F:structural constituent of ribosome"/>
    <property type="evidence" value="ECO:0000318"/>
    <property type="project" value="GO_Central"/>
</dbReference>
<dbReference type="GO" id="GO:0000049">
    <property type="term" value="F:tRNA binding"/>
    <property type="evidence" value="ECO:0007669"/>
    <property type="project" value="UniProtKB-UniRule"/>
</dbReference>
<dbReference type="GO" id="GO:0000028">
    <property type="term" value="P:ribosomal small subunit assembly"/>
    <property type="evidence" value="ECO:0000318"/>
    <property type="project" value="GO_Central"/>
</dbReference>
<dbReference type="GO" id="GO:0006412">
    <property type="term" value="P:translation"/>
    <property type="evidence" value="ECO:0000318"/>
    <property type="project" value="GO_Central"/>
</dbReference>
<dbReference type="CDD" id="cd14869">
    <property type="entry name" value="uS7_Bacteria"/>
    <property type="match status" value="1"/>
</dbReference>
<dbReference type="FunFam" id="1.10.455.10:FF:000001">
    <property type="entry name" value="30S ribosomal protein S7"/>
    <property type="match status" value="1"/>
</dbReference>
<dbReference type="Gene3D" id="1.10.455.10">
    <property type="entry name" value="Ribosomal protein S7 domain"/>
    <property type="match status" value="1"/>
</dbReference>
<dbReference type="HAMAP" id="MF_00480_B">
    <property type="entry name" value="Ribosomal_uS7_B"/>
    <property type="match status" value="1"/>
</dbReference>
<dbReference type="InterPro" id="IPR000235">
    <property type="entry name" value="Ribosomal_uS7"/>
</dbReference>
<dbReference type="InterPro" id="IPR005717">
    <property type="entry name" value="Ribosomal_uS7_bac/org-type"/>
</dbReference>
<dbReference type="InterPro" id="IPR020606">
    <property type="entry name" value="Ribosomal_uS7_CS"/>
</dbReference>
<dbReference type="InterPro" id="IPR023798">
    <property type="entry name" value="Ribosomal_uS7_dom"/>
</dbReference>
<dbReference type="InterPro" id="IPR036823">
    <property type="entry name" value="Ribosomal_uS7_dom_sf"/>
</dbReference>
<dbReference type="NCBIfam" id="TIGR01029">
    <property type="entry name" value="rpsG_bact"/>
    <property type="match status" value="1"/>
</dbReference>
<dbReference type="PANTHER" id="PTHR11205">
    <property type="entry name" value="RIBOSOMAL PROTEIN S7"/>
    <property type="match status" value="1"/>
</dbReference>
<dbReference type="Pfam" id="PF00177">
    <property type="entry name" value="Ribosomal_S7"/>
    <property type="match status" value="1"/>
</dbReference>
<dbReference type="PIRSF" id="PIRSF002122">
    <property type="entry name" value="RPS7p_RPS7a_RPS5e_RPS7o"/>
    <property type="match status" value="1"/>
</dbReference>
<dbReference type="SUPFAM" id="SSF47973">
    <property type="entry name" value="Ribosomal protein S7"/>
    <property type="match status" value="1"/>
</dbReference>
<dbReference type="PROSITE" id="PS00052">
    <property type="entry name" value="RIBOSOMAL_S7"/>
    <property type="match status" value="1"/>
</dbReference>
<comment type="function">
    <text evidence="1">One of the primary rRNA binding proteins, it binds directly to 16S rRNA where it nucleates assembly of the head domain of the 30S subunit. Is located at the subunit interface close to the decoding center, probably blocks exit of the E-site tRNA.</text>
</comment>
<comment type="subunit">
    <text evidence="1">Part of the 30S ribosomal subunit. Contacts proteins S9 and S11.</text>
</comment>
<comment type="similarity">
    <text evidence="1">Belongs to the universal ribosomal protein uS7 family.</text>
</comment>
<evidence type="ECO:0000255" key="1">
    <source>
        <dbReference type="HAMAP-Rule" id="MF_00480"/>
    </source>
</evidence>
<evidence type="ECO:0000305" key="2"/>
<feature type="chain" id="PRO_0000124230" description="Small ribosomal subunit protein uS7">
    <location>
        <begin position="1"/>
        <end position="156"/>
    </location>
</feature>
<proteinExistence type="inferred from homology"/>
<reference key="1">
    <citation type="journal article" date="2002" name="DNA Res.">
        <title>Complete genomic sequence of nitrogen-fixing symbiotic bacterium Bradyrhizobium japonicum USDA110.</title>
        <authorList>
            <person name="Kaneko T."/>
            <person name="Nakamura Y."/>
            <person name="Sato S."/>
            <person name="Minamisawa K."/>
            <person name="Uchiumi T."/>
            <person name="Sasamoto S."/>
            <person name="Watanabe A."/>
            <person name="Idesawa K."/>
            <person name="Iriguchi M."/>
            <person name="Kawashima K."/>
            <person name="Kohara M."/>
            <person name="Matsumoto M."/>
            <person name="Shimpo S."/>
            <person name="Tsuruoka H."/>
            <person name="Wada T."/>
            <person name="Yamada M."/>
            <person name="Tabata S."/>
        </authorList>
    </citation>
    <scope>NUCLEOTIDE SEQUENCE [LARGE SCALE GENOMIC DNA]</scope>
    <source>
        <strain>JCM 10833 / BCRC 13528 / IAM 13628 / NBRC 14792 / USDA 110</strain>
    </source>
</reference>
<gene>
    <name evidence="1" type="primary">rpsG</name>
    <name type="ordered locus">bll5404</name>
</gene>
<protein>
    <recommendedName>
        <fullName evidence="1">Small ribosomal subunit protein uS7</fullName>
    </recommendedName>
    <alternativeName>
        <fullName evidence="2">30S ribosomal protein S7</fullName>
    </alternativeName>
</protein>
<organism>
    <name type="scientific">Bradyrhizobium diazoefficiens (strain JCM 10833 / BCRC 13528 / IAM 13628 / NBRC 14792 / USDA 110)</name>
    <dbReference type="NCBI Taxonomy" id="224911"/>
    <lineage>
        <taxon>Bacteria</taxon>
        <taxon>Pseudomonadati</taxon>
        <taxon>Pseudomonadota</taxon>
        <taxon>Alphaproteobacteria</taxon>
        <taxon>Hyphomicrobiales</taxon>
        <taxon>Nitrobacteraceae</taxon>
        <taxon>Bradyrhizobium</taxon>
    </lineage>
</organism>
<name>RS7_BRADU</name>
<sequence length="156" mass="17729">MSRRHSAEKREVLPDPKFGNIVITKFMNSVMYAGKKSVAEGIVYGALGIIETKTKQNPLGVFEQALENVMPTIEVRSRRVGGATYQVPVEVRSTRRQALGIRWLISAARERNEKTMTERLSAELLDASNNRGNAVKKREDVHRMAEANRAFSHYRW</sequence>